<accession>C1KWF9</accession>
<dbReference type="EC" id="1.8.4.11" evidence="1"/>
<dbReference type="EMBL" id="FM242711">
    <property type="protein sequence ID" value="CAS05634.1"/>
    <property type="molecule type" value="Genomic_DNA"/>
</dbReference>
<dbReference type="RefSeq" id="WP_003728282.1">
    <property type="nucleotide sequence ID" value="NC_012488.1"/>
</dbReference>
<dbReference type="SMR" id="C1KWF9"/>
<dbReference type="KEGG" id="lmc:Lm4b_01876"/>
<dbReference type="HOGENOM" id="CLU_031040_10_1_9"/>
<dbReference type="GO" id="GO:0033744">
    <property type="term" value="F:L-methionine:thioredoxin-disulfide S-oxidoreductase activity"/>
    <property type="evidence" value="ECO:0007669"/>
    <property type="project" value="RHEA"/>
</dbReference>
<dbReference type="GO" id="GO:0008113">
    <property type="term" value="F:peptide-methionine (S)-S-oxide reductase activity"/>
    <property type="evidence" value="ECO:0007669"/>
    <property type="project" value="UniProtKB-UniRule"/>
</dbReference>
<dbReference type="GO" id="GO:0036211">
    <property type="term" value="P:protein modification process"/>
    <property type="evidence" value="ECO:0007669"/>
    <property type="project" value="UniProtKB-UniRule"/>
</dbReference>
<dbReference type="FunFam" id="3.30.1060.10:FF:000003">
    <property type="entry name" value="Peptide methionine sulfoxide reductase MsrA"/>
    <property type="match status" value="1"/>
</dbReference>
<dbReference type="Gene3D" id="3.30.1060.10">
    <property type="entry name" value="Peptide methionine sulphoxide reductase MsrA"/>
    <property type="match status" value="1"/>
</dbReference>
<dbReference type="HAMAP" id="MF_01401">
    <property type="entry name" value="MsrA"/>
    <property type="match status" value="1"/>
</dbReference>
<dbReference type="InterPro" id="IPR002569">
    <property type="entry name" value="Met_Sox_Rdtase_MsrA_dom"/>
</dbReference>
<dbReference type="InterPro" id="IPR036509">
    <property type="entry name" value="Met_Sox_Rdtase_MsrA_sf"/>
</dbReference>
<dbReference type="NCBIfam" id="TIGR00401">
    <property type="entry name" value="msrA"/>
    <property type="match status" value="1"/>
</dbReference>
<dbReference type="PANTHER" id="PTHR43774">
    <property type="entry name" value="PEPTIDE METHIONINE SULFOXIDE REDUCTASE"/>
    <property type="match status" value="1"/>
</dbReference>
<dbReference type="PANTHER" id="PTHR43774:SF1">
    <property type="entry name" value="PEPTIDE METHIONINE SULFOXIDE REDUCTASE MSRA 2"/>
    <property type="match status" value="1"/>
</dbReference>
<dbReference type="Pfam" id="PF01625">
    <property type="entry name" value="PMSR"/>
    <property type="match status" value="1"/>
</dbReference>
<dbReference type="SUPFAM" id="SSF55068">
    <property type="entry name" value="Peptide methionine sulfoxide reductase"/>
    <property type="match status" value="1"/>
</dbReference>
<protein>
    <recommendedName>
        <fullName evidence="1">Peptide methionine sulfoxide reductase MsrA</fullName>
        <shortName evidence="1">Protein-methionine-S-oxide reductase</shortName>
        <ecNumber evidence="1">1.8.4.11</ecNumber>
    </recommendedName>
    <alternativeName>
        <fullName evidence="1">Peptide-methionine (S)-S-oxide reductase</fullName>
        <shortName evidence="1">Peptide Met(O) reductase</shortName>
    </alternativeName>
</protein>
<comment type="function">
    <text evidence="1">Has an important function as a repair enzyme for proteins that have been inactivated by oxidation. Catalyzes the reversible oxidation-reduction of methionine sulfoxide in proteins to methionine.</text>
</comment>
<comment type="catalytic activity">
    <reaction evidence="1">
        <text>L-methionyl-[protein] + [thioredoxin]-disulfide + H2O = L-methionyl-(S)-S-oxide-[protein] + [thioredoxin]-dithiol</text>
        <dbReference type="Rhea" id="RHEA:14217"/>
        <dbReference type="Rhea" id="RHEA-COMP:10698"/>
        <dbReference type="Rhea" id="RHEA-COMP:10700"/>
        <dbReference type="Rhea" id="RHEA-COMP:12313"/>
        <dbReference type="Rhea" id="RHEA-COMP:12315"/>
        <dbReference type="ChEBI" id="CHEBI:15377"/>
        <dbReference type="ChEBI" id="CHEBI:16044"/>
        <dbReference type="ChEBI" id="CHEBI:29950"/>
        <dbReference type="ChEBI" id="CHEBI:44120"/>
        <dbReference type="ChEBI" id="CHEBI:50058"/>
        <dbReference type="EC" id="1.8.4.11"/>
    </reaction>
</comment>
<comment type="catalytic activity">
    <reaction evidence="1">
        <text>[thioredoxin]-disulfide + L-methionine + H2O = L-methionine (S)-S-oxide + [thioredoxin]-dithiol</text>
        <dbReference type="Rhea" id="RHEA:19993"/>
        <dbReference type="Rhea" id="RHEA-COMP:10698"/>
        <dbReference type="Rhea" id="RHEA-COMP:10700"/>
        <dbReference type="ChEBI" id="CHEBI:15377"/>
        <dbReference type="ChEBI" id="CHEBI:29950"/>
        <dbReference type="ChEBI" id="CHEBI:50058"/>
        <dbReference type="ChEBI" id="CHEBI:57844"/>
        <dbReference type="ChEBI" id="CHEBI:58772"/>
        <dbReference type="EC" id="1.8.4.11"/>
    </reaction>
</comment>
<comment type="similarity">
    <text evidence="1">Belongs to the MsrA Met sulfoxide reductase family.</text>
</comment>
<proteinExistence type="inferred from homology"/>
<organism>
    <name type="scientific">Listeria monocytogenes serotype 4b (strain CLIP80459)</name>
    <dbReference type="NCBI Taxonomy" id="568819"/>
    <lineage>
        <taxon>Bacteria</taxon>
        <taxon>Bacillati</taxon>
        <taxon>Bacillota</taxon>
        <taxon>Bacilli</taxon>
        <taxon>Bacillales</taxon>
        <taxon>Listeriaceae</taxon>
        <taxon>Listeria</taxon>
    </lineage>
</organism>
<gene>
    <name evidence="1" type="primary">msrA</name>
    <name type="ordered locus">Lm4b_01876</name>
</gene>
<sequence length="177" mass="19947">MTKESLEKATFAGGCFWCMVKPFDTQPGIEKVISGYTGGHTVNPTYKEVCSGTTGHTEAIQITFDPAVFPYEKLVEVYWQQTDPTDAAGQFVDRGDSYRPVIFYHNEEQKEIAEKSKAALDASGRFKKPIVTEIAKAETFYPAEEYHQDFYKKEKAHYEGYQVASGRAAFIDANWKG</sequence>
<feature type="chain" id="PRO_1000215188" description="Peptide methionine sulfoxide reductase MsrA">
    <location>
        <begin position="1"/>
        <end position="177"/>
    </location>
</feature>
<feature type="active site" evidence="1">
    <location>
        <position position="15"/>
    </location>
</feature>
<reference key="1">
    <citation type="journal article" date="2012" name="BMC Genomics">
        <title>Comparative genomics and transcriptomics of lineages I, II, and III strains of Listeria monocytogenes.</title>
        <authorList>
            <person name="Hain T."/>
            <person name="Ghai R."/>
            <person name="Billion A."/>
            <person name="Kuenne C.T."/>
            <person name="Steinweg C."/>
            <person name="Izar B."/>
            <person name="Mohamed W."/>
            <person name="Mraheil M."/>
            <person name="Domann E."/>
            <person name="Schaffrath S."/>
            <person name="Karst U."/>
            <person name="Goesmann A."/>
            <person name="Oehm S."/>
            <person name="Puhler A."/>
            <person name="Merkl R."/>
            <person name="Vorwerk S."/>
            <person name="Glaser P."/>
            <person name="Garrido P."/>
            <person name="Rusniok C."/>
            <person name="Buchrieser C."/>
            <person name="Goebel W."/>
            <person name="Chakraborty T."/>
        </authorList>
    </citation>
    <scope>NUCLEOTIDE SEQUENCE [LARGE SCALE GENOMIC DNA]</scope>
    <source>
        <strain>CLIP80459</strain>
    </source>
</reference>
<evidence type="ECO:0000255" key="1">
    <source>
        <dbReference type="HAMAP-Rule" id="MF_01401"/>
    </source>
</evidence>
<keyword id="KW-0560">Oxidoreductase</keyword>
<name>MSRA_LISMC</name>